<gene>
    <name evidence="1" type="primary">thiE</name>
    <name type="ordered locus">CPR_1336</name>
</gene>
<comment type="function">
    <text evidence="1">Condenses 4-methyl-5-(beta-hydroxyethyl)thiazole monophosphate (THZ-P) and 2-methyl-4-amino-5-hydroxymethyl pyrimidine pyrophosphate (HMP-PP) to form thiamine monophosphate (TMP).</text>
</comment>
<comment type="catalytic activity">
    <reaction evidence="1">
        <text>2-[(2R,5Z)-2-carboxy-4-methylthiazol-5(2H)-ylidene]ethyl phosphate + 4-amino-2-methyl-5-(diphosphooxymethyl)pyrimidine + 2 H(+) = thiamine phosphate + CO2 + diphosphate</text>
        <dbReference type="Rhea" id="RHEA:47844"/>
        <dbReference type="ChEBI" id="CHEBI:15378"/>
        <dbReference type="ChEBI" id="CHEBI:16526"/>
        <dbReference type="ChEBI" id="CHEBI:33019"/>
        <dbReference type="ChEBI" id="CHEBI:37575"/>
        <dbReference type="ChEBI" id="CHEBI:57841"/>
        <dbReference type="ChEBI" id="CHEBI:62899"/>
        <dbReference type="EC" id="2.5.1.3"/>
    </reaction>
</comment>
<comment type="catalytic activity">
    <reaction evidence="1">
        <text>2-(2-carboxy-4-methylthiazol-5-yl)ethyl phosphate + 4-amino-2-methyl-5-(diphosphooxymethyl)pyrimidine + 2 H(+) = thiamine phosphate + CO2 + diphosphate</text>
        <dbReference type="Rhea" id="RHEA:47848"/>
        <dbReference type="ChEBI" id="CHEBI:15378"/>
        <dbReference type="ChEBI" id="CHEBI:16526"/>
        <dbReference type="ChEBI" id="CHEBI:33019"/>
        <dbReference type="ChEBI" id="CHEBI:37575"/>
        <dbReference type="ChEBI" id="CHEBI:57841"/>
        <dbReference type="ChEBI" id="CHEBI:62890"/>
        <dbReference type="EC" id="2.5.1.3"/>
    </reaction>
</comment>
<comment type="catalytic activity">
    <reaction evidence="1">
        <text>4-methyl-5-(2-phosphooxyethyl)-thiazole + 4-amino-2-methyl-5-(diphosphooxymethyl)pyrimidine + H(+) = thiamine phosphate + diphosphate</text>
        <dbReference type="Rhea" id="RHEA:22328"/>
        <dbReference type="ChEBI" id="CHEBI:15378"/>
        <dbReference type="ChEBI" id="CHEBI:33019"/>
        <dbReference type="ChEBI" id="CHEBI:37575"/>
        <dbReference type="ChEBI" id="CHEBI:57841"/>
        <dbReference type="ChEBI" id="CHEBI:58296"/>
        <dbReference type="EC" id="2.5.1.3"/>
    </reaction>
</comment>
<comment type="cofactor">
    <cofactor evidence="1">
        <name>Mg(2+)</name>
        <dbReference type="ChEBI" id="CHEBI:18420"/>
    </cofactor>
    <text evidence="1">Binds 1 Mg(2+) ion per subunit.</text>
</comment>
<comment type="pathway">
    <text evidence="1">Cofactor biosynthesis; thiamine diphosphate biosynthesis; thiamine phosphate from 4-amino-2-methyl-5-diphosphomethylpyrimidine and 4-methyl-5-(2-phosphoethyl)-thiazole: step 1/1.</text>
</comment>
<comment type="similarity">
    <text evidence="1">Belongs to the thiamine-phosphate synthase family.</text>
</comment>
<accession>Q0STA1</accession>
<proteinExistence type="inferred from homology"/>
<reference key="1">
    <citation type="journal article" date="2006" name="Genome Res.">
        <title>Skewed genomic variability in strains of the toxigenic bacterial pathogen, Clostridium perfringens.</title>
        <authorList>
            <person name="Myers G.S.A."/>
            <person name="Rasko D.A."/>
            <person name="Cheung J.K."/>
            <person name="Ravel J."/>
            <person name="Seshadri R."/>
            <person name="DeBoy R.T."/>
            <person name="Ren Q."/>
            <person name="Varga J."/>
            <person name="Awad M.M."/>
            <person name="Brinkac L.M."/>
            <person name="Daugherty S.C."/>
            <person name="Haft D.H."/>
            <person name="Dodson R.J."/>
            <person name="Madupu R."/>
            <person name="Nelson W.C."/>
            <person name="Rosovitz M.J."/>
            <person name="Sullivan S.A."/>
            <person name="Khouri H."/>
            <person name="Dimitrov G.I."/>
            <person name="Watkins K.L."/>
            <person name="Mulligan S."/>
            <person name="Benton J."/>
            <person name="Radune D."/>
            <person name="Fisher D.J."/>
            <person name="Atkins H.S."/>
            <person name="Hiscox T."/>
            <person name="Jost B.H."/>
            <person name="Billington S.J."/>
            <person name="Songer J.G."/>
            <person name="McClane B.A."/>
            <person name="Titball R.W."/>
            <person name="Rood J.I."/>
            <person name="Melville S.B."/>
            <person name="Paulsen I.T."/>
        </authorList>
    </citation>
    <scope>NUCLEOTIDE SEQUENCE [LARGE SCALE GENOMIC DNA]</scope>
    <source>
        <strain>SM101 / Type A</strain>
    </source>
</reference>
<protein>
    <recommendedName>
        <fullName evidence="1">Thiamine-phosphate synthase</fullName>
        <shortName evidence="1">TP synthase</shortName>
        <shortName evidence="1">TPS</shortName>
        <ecNumber evidence="1">2.5.1.3</ecNumber>
    </recommendedName>
    <alternativeName>
        <fullName evidence="1">Thiamine-phosphate pyrophosphorylase</fullName>
        <shortName evidence="1">TMP pyrophosphorylase</shortName>
        <shortName evidence="1">TMP-PPase</shortName>
    </alternativeName>
</protein>
<feature type="chain" id="PRO_1000008135" description="Thiamine-phosphate synthase">
    <location>
        <begin position="1"/>
        <end position="207"/>
    </location>
</feature>
<feature type="binding site" evidence="1">
    <location>
        <begin position="38"/>
        <end position="42"/>
    </location>
    <ligand>
        <name>4-amino-2-methyl-5-(diphosphooxymethyl)pyrimidine</name>
        <dbReference type="ChEBI" id="CHEBI:57841"/>
    </ligand>
</feature>
<feature type="binding site" evidence="1">
    <location>
        <position position="70"/>
    </location>
    <ligand>
        <name>4-amino-2-methyl-5-(diphosphooxymethyl)pyrimidine</name>
        <dbReference type="ChEBI" id="CHEBI:57841"/>
    </ligand>
</feature>
<feature type="binding site" evidence="1">
    <location>
        <position position="71"/>
    </location>
    <ligand>
        <name>Mg(2+)</name>
        <dbReference type="ChEBI" id="CHEBI:18420"/>
    </ligand>
</feature>
<feature type="binding site" evidence="1">
    <location>
        <position position="90"/>
    </location>
    <ligand>
        <name>Mg(2+)</name>
        <dbReference type="ChEBI" id="CHEBI:18420"/>
    </ligand>
</feature>
<feature type="binding site" evidence="1">
    <location>
        <position position="109"/>
    </location>
    <ligand>
        <name>4-amino-2-methyl-5-(diphosphooxymethyl)pyrimidine</name>
        <dbReference type="ChEBI" id="CHEBI:57841"/>
    </ligand>
</feature>
<feature type="binding site" evidence="1">
    <location>
        <begin position="135"/>
        <end position="137"/>
    </location>
    <ligand>
        <name>2-[(2R,5Z)-2-carboxy-4-methylthiazol-5(2H)-ylidene]ethyl phosphate</name>
        <dbReference type="ChEBI" id="CHEBI:62899"/>
    </ligand>
</feature>
<feature type="binding site" evidence="1">
    <location>
        <position position="138"/>
    </location>
    <ligand>
        <name>4-amino-2-methyl-5-(diphosphooxymethyl)pyrimidine</name>
        <dbReference type="ChEBI" id="CHEBI:57841"/>
    </ligand>
</feature>
<feature type="binding site" evidence="1">
    <location>
        <position position="165"/>
    </location>
    <ligand>
        <name>2-[(2R,5Z)-2-carboxy-4-methylthiazol-5(2H)-ylidene]ethyl phosphate</name>
        <dbReference type="ChEBI" id="CHEBI:62899"/>
    </ligand>
</feature>
<feature type="binding site" evidence="1">
    <location>
        <begin position="185"/>
        <end position="186"/>
    </location>
    <ligand>
        <name>2-[(2R,5Z)-2-carboxy-4-methylthiazol-5(2H)-ylidene]ethyl phosphate</name>
        <dbReference type="ChEBI" id="CHEBI:62899"/>
    </ligand>
</feature>
<dbReference type="EC" id="2.5.1.3" evidence="1"/>
<dbReference type="EMBL" id="CP000312">
    <property type="protein sequence ID" value="ABG85325.1"/>
    <property type="molecule type" value="Genomic_DNA"/>
</dbReference>
<dbReference type="RefSeq" id="WP_011592313.1">
    <property type="nucleotide sequence ID" value="NC_008262.1"/>
</dbReference>
<dbReference type="SMR" id="Q0STA1"/>
<dbReference type="KEGG" id="cpr:CPR_1336"/>
<dbReference type="UniPathway" id="UPA00060">
    <property type="reaction ID" value="UER00141"/>
</dbReference>
<dbReference type="Proteomes" id="UP000001824">
    <property type="component" value="Chromosome"/>
</dbReference>
<dbReference type="GO" id="GO:0005737">
    <property type="term" value="C:cytoplasm"/>
    <property type="evidence" value="ECO:0007669"/>
    <property type="project" value="TreeGrafter"/>
</dbReference>
<dbReference type="GO" id="GO:0000287">
    <property type="term" value="F:magnesium ion binding"/>
    <property type="evidence" value="ECO:0007669"/>
    <property type="project" value="UniProtKB-UniRule"/>
</dbReference>
<dbReference type="GO" id="GO:0004789">
    <property type="term" value="F:thiamine-phosphate diphosphorylase activity"/>
    <property type="evidence" value="ECO:0007669"/>
    <property type="project" value="UniProtKB-UniRule"/>
</dbReference>
<dbReference type="GO" id="GO:0009228">
    <property type="term" value="P:thiamine biosynthetic process"/>
    <property type="evidence" value="ECO:0007669"/>
    <property type="project" value="UniProtKB-KW"/>
</dbReference>
<dbReference type="GO" id="GO:0009229">
    <property type="term" value="P:thiamine diphosphate biosynthetic process"/>
    <property type="evidence" value="ECO:0007669"/>
    <property type="project" value="UniProtKB-UniRule"/>
</dbReference>
<dbReference type="CDD" id="cd00564">
    <property type="entry name" value="TMP_TenI"/>
    <property type="match status" value="1"/>
</dbReference>
<dbReference type="FunFam" id="3.20.20.70:FF:000096">
    <property type="entry name" value="Thiamine-phosphate synthase"/>
    <property type="match status" value="1"/>
</dbReference>
<dbReference type="Gene3D" id="3.20.20.70">
    <property type="entry name" value="Aldolase class I"/>
    <property type="match status" value="1"/>
</dbReference>
<dbReference type="HAMAP" id="MF_00097">
    <property type="entry name" value="TMP_synthase"/>
    <property type="match status" value="1"/>
</dbReference>
<dbReference type="InterPro" id="IPR013785">
    <property type="entry name" value="Aldolase_TIM"/>
</dbReference>
<dbReference type="InterPro" id="IPR036206">
    <property type="entry name" value="ThiamineP_synth_sf"/>
</dbReference>
<dbReference type="InterPro" id="IPR022998">
    <property type="entry name" value="ThiamineP_synth_TenI"/>
</dbReference>
<dbReference type="InterPro" id="IPR034291">
    <property type="entry name" value="TMP_synthase"/>
</dbReference>
<dbReference type="NCBIfam" id="TIGR00693">
    <property type="entry name" value="thiE"/>
    <property type="match status" value="1"/>
</dbReference>
<dbReference type="PANTHER" id="PTHR20857:SF23">
    <property type="entry name" value="THIAMINE BIOSYNTHETIC BIFUNCTIONAL ENZYME"/>
    <property type="match status" value="1"/>
</dbReference>
<dbReference type="PANTHER" id="PTHR20857">
    <property type="entry name" value="THIAMINE-PHOSPHATE PYROPHOSPHORYLASE"/>
    <property type="match status" value="1"/>
</dbReference>
<dbReference type="Pfam" id="PF02581">
    <property type="entry name" value="TMP-TENI"/>
    <property type="match status" value="1"/>
</dbReference>
<dbReference type="SUPFAM" id="SSF51391">
    <property type="entry name" value="Thiamin phosphate synthase"/>
    <property type="match status" value="1"/>
</dbReference>
<keyword id="KW-0460">Magnesium</keyword>
<keyword id="KW-0479">Metal-binding</keyword>
<keyword id="KW-0784">Thiamine biosynthesis</keyword>
<keyword id="KW-0808">Transferase</keyword>
<evidence type="ECO:0000255" key="1">
    <source>
        <dbReference type="HAMAP-Rule" id="MF_00097"/>
    </source>
</evidence>
<organism>
    <name type="scientific">Clostridium perfringens (strain SM101 / Type A)</name>
    <dbReference type="NCBI Taxonomy" id="289380"/>
    <lineage>
        <taxon>Bacteria</taxon>
        <taxon>Bacillati</taxon>
        <taxon>Bacillota</taxon>
        <taxon>Clostridia</taxon>
        <taxon>Eubacteriales</taxon>
        <taxon>Clostridiaceae</taxon>
        <taxon>Clostridium</taxon>
    </lineage>
</organism>
<name>THIE_CLOPS</name>
<sequence length="207" mass="22898">MSNKDYKKLYLVTDYRIPFNELLEKTKEALIGGVSIVQYRAKNKETKEMCKEARALKKLCDEFGALFLVNDRIDVALAVKAHGVHIGQDDMDVSIAREIMPKDAIIGVTVHNKEEALKAIKDGADNLGVGALFSTNSKDDATLMTLETLREIKSVSNIPLYGIGGITPYNLNKDILENLDGVAVISALLNSDNIREKSKEFLNILSK</sequence>